<sequence length="238" mass="24756">MTTSPVKVLIHGASGRMGKALLRLAAEDDALHVVGAVVGRSPSQRVVDGVPYFAANELGGAPAFDVAIDFSLPQGFAPILALCVQRGKPLVSGTTGLDEAQRAGLLQAAGQIPLVWASNFSLGVAVLTELVERAAGSLPGWDCDIIEAHHVHKQDAPSGTALTLGEAATGSGAQPRFASVRAGDIVGEHSVQFTGLGERVELIHRATNRDIFARGALHAAKRLLGKPPGSYRVRDLVL</sequence>
<reference key="1">
    <citation type="journal article" date="2005" name="Genome Res.">
        <title>Comparative and functional genomic analyses of the pathogenicity of phytopathogen Xanthomonas campestris pv. campestris.</title>
        <authorList>
            <person name="Qian W."/>
            <person name="Jia Y."/>
            <person name="Ren S.-X."/>
            <person name="He Y.-Q."/>
            <person name="Feng J.-X."/>
            <person name="Lu L.-F."/>
            <person name="Sun Q."/>
            <person name="Ying G."/>
            <person name="Tang D.-J."/>
            <person name="Tang H."/>
            <person name="Wu W."/>
            <person name="Hao P."/>
            <person name="Wang L."/>
            <person name="Jiang B.-L."/>
            <person name="Zeng S."/>
            <person name="Gu W.-Y."/>
            <person name="Lu G."/>
            <person name="Rong L."/>
            <person name="Tian Y."/>
            <person name="Yao Z."/>
            <person name="Fu G."/>
            <person name="Chen B."/>
            <person name="Fang R."/>
            <person name="Qiang B."/>
            <person name="Chen Z."/>
            <person name="Zhao G.-P."/>
            <person name="Tang J.-L."/>
            <person name="He C."/>
        </authorList>
    </citation>
    <scope>NUCLEOTIDE SEQUENCE [LARGE SCALE GENOMIC DNA]</scope>
    <source>
        <strain>8004</strain>
    </source>
</reference>
<evidence type="ECO:0000255" key="1">
    <source>
        <dbReference type="HAMAP-Rule" id="MF_00102"/>
    </source>
</evidence>
<evidence type="ECO:0000305" key="2"/>
<proteinExistence type="inferred from homology"/>
<protein>
    <recommendedName>
        <fullName evidence="1">4-hydroxy-tetrahydrodipicolinate reductase</fullName>
        <shortName evidence="1">HTPA reductase</shortName>
        <ecNumber evidence="1">1.17.1.8</ecNumber>
    </recommendedName>
</protein>
<accession>Q4UU71</accession>
<keyword id="KW-0028">Amino-acid biosynthesis</keyword>
<keyword id="KW-0963">Cytoplasm</keyword>
<keyword id="KW-0220">Diaminopimelate biosynthesis</keyword>
<keyword id="KW-0457">Lysine biosynthesis</keyword>
<keyword id="KW-0520">NAD</keyword>
<keyword id="KW-0521">NADP</keyword>
<keyword id="KW-0560">Oxidoreductase</keyword>
<dbReference type="EC" id="1.17.1.8" evidence="1"/>
<dbReference type="EMBL" id="CP000050">
    <property type="protein sequence ID" value="AAY49402.1"/>
    <property type="molecule type" value="Genomic_DNA"/>
</dbReference>
<dbReference type="RefSeq" id="WP_011037010.1">
    <property type="nucleotide sequence ID" value="NZ_CP155948.1"/>
</dbReference>
<dbReference type="SMR" id="Q4UU71"/>
<dbReference type="GeneID" id="58013611"/>
<dbReference type="KEGG" id="xcb:XC_2349"/>
<dbReference type="HOGENOM" id="CLU_047479_2_2_6"/>
<dbReference type="UniPathway" id="UPA00034">
    <property type="reaction ID" value="UER00018"/>
</dbReference>
<dbReference type="Proteomes" id="UP000000420">
    <property type="component" value="Chromosome"/>
</dbReference>
<dbReference type="GO" id="GO:0005829">
    <property type="term" value="C:cytosol"/>
    <property type="evidence" value="ECO:0007669"/>
    <property type="project" value="TreeGrafter"/>
</dbReference>
<dbReference type="GO" id="GO:0008839">
    <property type="term" value="F:4-hydroxy-tetrahydrodipicolinate reductase"/>
    <property type="evidence" value="ECO:0007669"/>
    <property type="project" value="UniProtKB-EC"/>
</dbReference>
<dbReference type="GO" id="GO:0051287">
    <property type="term" value="F:NAD binding"/>
    <property type="evidence" value="ECO:0007669"/>
    <property type="project" value="UniProtKB-UniRule"/>
</dbReference>
<dbReference type="GO" id="GO:0050661">
    <property type="term" value="F:NADP binding"/>
    <property type="evidence" value="ECO:0007669"/>
    <property type="project" value="UniProtKB-UniRule"/>
</dbReference>
<dbReference type="GO" id="GO:0016726">
    <property type="term" value="F:oxidoreductase activity, acting on CH or CH2 groups, NAD or NADP as acceptor"/>
    <property type="evidence" value="ECO:0007669"/>
    <property type="project" value="UniProtKB-UniRule"/>
</dbReference>
<dbReference type="GO" id="GO:0019877">
    <property type="term" value="P:diaminopimelate biosynthetic process"/>
    <property type="evidence" value="ECO:0007669"/>
    <property type="project" value="UniProtKB-UniRule"/>
</dbReference>
<dbReference type="GO" id="GO:0009089">
    <property type="term" value="P:lysine biosynthetic process via diaminopimelate"/>
    <property type="evidence" value="ECO:0007669"/>
    <property type="project" value="UniProtKB-UniRule"/>
</dbReference>
<dbReference type="CDD" id="cd02274">
    <property type="entry name" value="DHDPR_N"/>
    <property type="match status" value="1"/>
</dbReference>
<dbReference type="Gene3D" id="3.30.360.10">
    <property type="entry name" value="Dihydrodipicolinate Reductase, domain 2"/>
    <property type="match status" value="1"/>
</dbReference>
<dbReference type="Gene3D" id="3.40.50.720">
    <property type="entry name" value="NAD(P)-binding Rossmann-like Domain"/>
    <property type="match status" value="1"/>
</dbReference>
<dbReference type="HAMAP" id="MF_00102">
    <property type="entry name" value="DapB"/>
    <property type="match status" value="1"/>
</dbReference>
<dbReference type="InterPro" id="IPR022663">
    <property type="entry name" value="DapB_C"/>
</dbReference>
<dbReference type="InterPro" id="IPR000846">
    <property type="entry name" value="DapB_N"/>
</dbReference>
<dbReference type="InterPro" id="IPR022664">
    <property type="entry name" value="DapB_N_CS"/>
</dbReference>
<dbReference type="InterPro" id="IPR023940">
    <property type="entry name" value="DHDPR_bac"/>
</dbReference>
<dbReference type="InterPro" id="IPR036291">
    <property type="entry name" value="NAD(P)-bd_dom_sf"/>
</dbReference>
<dbReference type="NCBIfam" id="TIGR00036">
    <property type="entry name" value="dapB"/>
    <property type="match status" value="1"/>
</dbReference>
<dbReference type="PANTHER" id="PTHR20836:SF0">
    <property type="entry name" value="4-HYDROXY-TETRAHYDRODIPICOLINATE REDUCTASE 1, CHLOROPLASTIC-RELATED"/>
    <property type="match status" value="1"/>
</dbReference>
<dbReference type="PANTHER" id="PTHR20836">
    <property type="entry name" value="DIHYDRODIPICOLINATE REDUCTASE"/>
    <property type="match status" value="1"/>
</dbReference>
<dbReference type="Pfam" id="PF05173">
    <property type="entry name" value="DapB_C"/>
    <property type="match status" value="1"/>
</dbReference>
<dbReference type="Pfam" id="PF01113">
    <property type="entry name" value="DapB_N"/>
    <property type="match status" value="1"/>
</dbReference>
<dbReference type="PIRSF" id="PIRSF000161">
    <property type="entry name" value="DHPR"/>
    <property type="match status" value="1"/>
</dbReference>
<dbReference type="SUPFAM" id="SSF55347">
    <property type="entry name" value="Glyceraldehyde-3-phosphate dehydrogenase-like, C-terminal domain"/>
    <property type="match status" value="1"/>
</dbReference>
<dbReference type="SUPFAM" id="SSF51735">
    <property type="entry name" value="NAD(P)-binding Rossmann-fold domains"/>
    <property type="match status" value="1"/>
</dbReference>
<dbReference type="PROSITE" id="PS01298">
    <property type="entry name" value="DAPB"/>
    <property type="match status" value="1"/>
</dbReference>
<gene>
    <name evidence="1" type="primary">dapB</name>
    <name type="ordered locus">XC_2349</name>
</gene>
<feature type="chain" id="PRO_0000228402" description="4-hydroxy-tetrahydrodipicolinate reductase">
    <location>
        <begin position="1"/>
        <end position="238"/>
    </location>
</feature>
<feature type="active site" description="Proton donor/acceptor" evidence="1">
    <location>
        <position position="149"/>
    </location>
</feature>
<feature type="active site" description="Proton donor" evidence="1">
    <location>
        <position position="153"/>
    </location>
</feature>
<feature type="binding site" evidence="1">
    <location>
        <begin position="12"/>
        <end position="17"/>
    </location>
    <ligand>
        <name>NAD(+)</name>
        <dbReference type="ChEBI" id="CHEBI:57540"/>
    </ligand>
</feature>
<feature type="binding site" evidence="1">
    <location>
        <position position="40"/>
    </location>
    <ligand>
        <name>NADP(+)</name>
        <dbReference type="ChEBI" id="CHEBI:58349"/>
    </ligand>
</feature>
<feature type="binding site" evidence="1">
    <location>
        <begin position="93"/>
        <end position="95"/>
    </location>
    <ligand>
        <name>NAD(+)</name>
        <dbReference type="ChEBI" id="CHEBI:57540"/>
    </ligand>
</feature>
<feature type="binding site" evidence="1">
    <location>
        <begin position="117"/>
        <end position="120"/>
    </location>
    <ligand>
        <name>NAD(+)</name>
        <dbReference type="ChEBI" id="CHEBI:57540"/>
    </ligand>
</feature>
<feature type="binding site" evidence="1">
    <location>
        <position position="150"/>
    </location>
    <ligand>
        <name>(S)-2,3,4,5-tetrahydrodipicolinate</name>
        <dbReference type="ChEBI" id="CHEBI:16845"/>
    </ligand>
</feature>
<feature type="binding site" evidence="1">
    <location>
        <begin position="159"/>
        <end position="160"/>
    </location>
    <ligand>
        <name>(S)-2,3,4,5-tetrahydrodipicolinate</name>
        <dbReference type="ChEBI" id="CHEBI:16845"/>
    </ligand>
</feature>
<comment type="function">
    <text evidence="1">Catalyzes the conversion of 4-hydroxy-tetrahydrodipicolinate (HTPA) to tetrahydrodipicolinate.</text>
</comment>
<comment type="catalytic activity">
    <reaction evidence="1">
        <text>(S)-2,3,4,5-tetrahydrodipicolinate + NAD(+) + H2O = (2S,4S)-4-hydroxy-2,3,4,5-tetrahydrodipicolinate + NADH + H(+)</text>
        <dbReference type="Rhea" id="RHEA:35323"/>
        <dbReference type="ChEBI" id="CHEBI:15377"/>
        <dbReference type="ChEBI" id="CHEBI:15378"/>
        <dbReference type="ChEBI" id="CHEBI:16845"/>
        <dbReference type="ChEBI" id="CHEBI:57540"/>
        <dbReference type="ChEBI" id="CHEBI:57945"/>
        <dbReference type="ChEBI" id="CHEBI:67139"/>
        <dbReference type="EC" id="1.17.1.8"/>
    </reaction>
</comment>
<comment type="catalytic activity">
    <reaction evidence="1">
        <text>(S)-2,3,4,5-tetrahydrodipicolinate + NADP(+) + H2O = (2S,4S)-4-hydroxy-2,3,4,5-tetrahydrodipicolinate + NADPH + H(+)</text>
        <dbReference type="Rhea" id="RHEA:35331"/>
        <dbReference type="ChEBI" id="CHEBI:15377"/>
        <dbReference type="ChEBI" id="CHEBI:15378"/>
        <dbReference type="ChEBI" id="CHEBI:16845"/>
        <dbReference type="ChEBI" id="CHEBI:57783"/>
        <dbReference type="ChEBI" id="CHEBI:58349"/>
        <dbReference type="ChEBI" id="CHEBI:67139"/>
        <dbReference type="EC" id="1.17.1.8"/>
    </reaction>
</comment>
<comment type="pathway">
    <text evidence="1">Amino-acid biosynthesis; L-lysine biosynthesis via DAP pathway; (S)-tetrahydrodipicolinate from L-aspartate: step 4/4.</text>
</comment>
<comment type="subcellular location">
    <subcellularLocation>
        <location evidence="1">Cytoplasm</location>
    </subcellularLocation>
</comment>
<comment type="similarity">
    <text evidence="1">Belongs to the DapB family.</text>
</comment>
<comment type="caution">
    <text evidence="2">Was originally thought to be a dihydrodipicolinate reductase (DHDPR), catalyzing the conversion of dihydrodipicolinate to tetrahydrodipicolinate. However, it was shown in E.coli that the substrate of the enzymatic reaction is not dihydrodipicolinate (DHDP) but in fact (2S,4S)-4-hydroxy-2,3,4,5-tetrahydrodipicolinic acid (HTPA), the product released by the DapA-catalyzed reaction.</text>
</comment>
<name>DAPB_XANC8</name>
<organism>
    <name type="scientific">Xanthomonas campestris pv. campestris (strain 8004)</name>
    <dbReference type="NCBI Taxonomy" id="314565"/>
    <lineage>
        <taxon>Bacteria</taxon>
        <taxon>Pseudomonadati</taxon>
        <taxon>Pseudomonadota</taxon>
        <taxon>Gammaproteobacteria</taxon>
        <taxon>Lysobacterales</taxon>
        <taxon>Lysobacteraceae</taxon>
        <taxon>Xanthomonas</taxon>
    </lineage>
</organism>